<organism>
    <name type="scientific">Arthrobacter sp. (strain FB24)</name>
    <dbReference type="NCBI Taxonomy" id="290399"/>
    <lineage>
        <taxon>Bacteria</taxon>
        <taxon>Bacillati</taxon>
        <taxon>Actinomycetota</taxon>
        <taxon>Actinomycetes</taxon>
        <taxon>Micrococcales</taxon>
        <taxon>Micrococcaceae</taxon>
        <taxon>Arthrobacter</taxon>
    </lineage>
</organism>
<keyword id="KW-0963">Cytoplasm</keyword>
<keyword id="KW-0489">Methyltransferase</keyword>
<keyword id="KW-0545">Nucleotide biosynthesis</keyword>
<keyword id="KW-1185">Reference proteome</keyword>
<keyword id="KW-0808">Transferase</keyword>
<comment type="function">
    <text evidence="1">Catalyzes the reductive methylation of 2'-deoxyuridine-5'-monophosphate (dUMP) to 2'-deoxythymidine-5'-monophosphate (dTMP) while utilizing 5,10-methylenetetrahydrofolate (mTHF) as the methyl donor and reductant in the reaction, yielding dihydrofolate (DHF) as a by-product. This enzymatic reaction provides an intracellular de novo source of dTMP, an essential precursor for DNA biosynthesis.</text>
</comment>
<comment type="catalytic activity">
    <reaction evidence="1">
        <text>dUMP + (6R)-5,10-methylene-5,6,7,8-tetrahydrofolate = 7,8-dihydrofolate + dTMP</text>
        <dbReference type="Rhea" id="RHEA:12104"/>
        <dbReference type="ChEBI" id="CHEBI:15636"/>
        <dbReference type="ChEBI" id="CHEBI:57451"/>
        <dbReference type="ChEBI" id="CHEBI:63528"/>
        <dbReference type="ChEBI" id="CHEBI:246422"/>
        <dbReference type="EC" id="2.1.1.45"/>
    </reaction>
</comment>
<comment type="pathway">
    <text evidence="1">Pyrimidine metabolism; dTTP biosynthesis.</text>
</comment>
<comment type="subunit">
    <text evidence="1">Homodimer.</text>
</comment>
<comment type="subcellular location">
    <subcellularLocation>
        <location evidence="1">Cytoplasm</location>
    </subcellularLocation>
</comment>
<comment type="similarity">
    <text evidence="1">Belongs to the thymidylate synthase family. Bacterial-type ThyA subfamily.</text>
</comment>
<protein>
    <recommendedName>
        <fullName evidence="1">Thymidylate synthase</fullName>
        <shortName evidence="1">TS</shortName>
        <shortName evidence="1">TSase</shortName>
        <ecNumber evidence="1">2.1.1.45</ecNumber>
    </recommendedName>
</protein>
<accession>A0JZC7</accession>
<evidence type="ECO:0000255" key="1">
    <source>
        <dbReference type="HAMAP-Rule" id="MF_00008"/>
    </source>
</evidence>
<dbReference type="EC" id="2.1.1.45" evidence="1"/>
<dbReference type="EMBL" id="CP000454">
    <property type="protein sequence ID" value="ABK04397.1"/>
    <property type="molecule type" value="Genomic_DNA"/>
</dbReference>
<dbReference type="RefSeq" id="WP_011692849.1">
    <property type="nucleotide sequence ID" value="NC_008541.1"/>
</dbReference>
<dbReference type="SMR" id="A0JZC7"/>
<dbReference type="STRING" id="290399.Arth_3018"/>
<dbReference type="KEGG" id="art:Arth_3018"/>
<dbReference type="eggNOG" id="COG0207">
    <property type="taxonomic scope" value="Bacteria"/>
</dbReference>
<dbReference type="HOGENOM" id="CLU_021669_0_0_11"/>
<dbReference type="OrthoDB" id="9774633at2"/>
<dbReference type="UniPathway" id="UPA00575"/>
<dbReference type="Proteomes" id="UP000000754">
    <property type="component" value="Chromosome"/>
</dbReference>
<dbReference type="GO" id="GO:0005829">
    <property type="term" value="C:cytosol"/>
    <property type="evidence" value="ECO:0007669"/>
    <property type="project" value="TreeGrafter"/>
</dbReference>
<dbReference type="GO" id="GO:0004799">
    <property type="term" value="F:thymidylate synthase activity"/>
    <property type="evidence" value="ECO:0007669"/>
    <property type="project" value="UniProtKB-UniRule"/>
</dbReference>
<dbReference type="GO" id="GO:0006231">
    <property type="term" value="P:dTMP biosynthetic process"/>
    <property type="evidence" value="ECO:0007669"/>
    <property type="project" value="UniProtKB-UniRule"/>
</dbReference>
<dbReference type="GO" id="GO:0006235">
    <property type="term" value="P:dTTP biosynthetic process"/>
    <property type="evidence" value="ECO:0007669"/>
    <property type="project" value="UniProtKB-UniRule"/>
</dbReference>
<dbReference type="GO" id="GO:0032259">
    <property type="term" value="P:methylation"/>
    <property type="evidence" value="ECO:0007669"/>
    <property type="project" value="UniProtKB-KW"/>
</dbReference>
<dbReference type="CDD" id="cd00351">
    <property type="entry name" value="TS_Pyrimidine_HMase"/>
    <property type="match status" value="1"/>
</dbReference>
<dbReference type="FunFam" id="3.30.572.10:FF:000001">
    <property type="entry name" value="Thymidylate synthase"/>
    <property type="match status" value="1"/>
</dbReference>
<dbReference type="Gene3D" id="3.30.572.10">
    <property type="entry name" value="Thymidylate synthase/dCMP hydroxymethylase domain"/>
    <property type="match status" value="1"/>
</dbReference>
<dbReference type="HAMAP" id="MF_00008">
    <property type="entry name" value="Thymidy_synth_bact"/>
    <property type="match status" value="1"/>
</dbReference>
<dbReference type="InterPro" id="IPR045097">
    <property type="entry name" value="Thymidate_synth/dCMP_Mease"/>
</dbReference>
<dbReference type="InterPro" id="IPR023451">
    <property type="entry name" value="Thymidate_synth/dCMP_Mease_dom"/>
</dbReference>
<dbReference type="InterPro" id="IPR036926">
    <property type="entry name" value="Thymidate_synth/dCMP_Mease_sf"/>
</dbReference>
<dbReference type="InterPro" id="IPR000398">
    <property type="entry name" value="Thymidylate_synthase"/>
</dbReference>
<dbReference type="InterPro" id="IPR020940">
    <property type="entry name" value="Thymidylate_synthase_AS"/>
</dbReference>
<dbReference type="NCBIfam" id="NF002497">
    <property type="entry name" value="PRK01827.1-3"/>
    <property type="match status" value="1"/>
</dbReference>
<dbReference type="NCBIfam" id="NF002499">
    <property type="entry name" value="PRK01827.1-5"/>
    <property type="match status" value="1"/>
</dbReference>
<dbReference type="NCBIfam" id="TIGR03284">
    <property type="entry name" value="thym_sym"/>
    <property type="match status" value="2"/>
</dbReference>
<dbReference type="PANTHER" id="PTHR11548">
    <property type="entry name" value="THYMIDYLATE SYNTHASE 1"/>
    <property type="match status" value="1"/>
</dbReference>
<dbReference type="PANTHER" id="PTHR11548:SF1">
    <property type="entry name" value="THYMIDYLATE SYNTHASE 1"/>
    <property type="match status" value="1"/>
</dbReference>
<dbReference type="Pfam" id="PF00303">
    <property type="entry name" value="Thymidylat_synt"/>
    <property type="match status" value="1"/>
</dbReference>
<dbReference type="PRINTS" id="PR00108">
    <property type="entry name" value="THYMDSNTHASE"/>
</dbReference>
<dbReference type="SUPFAM" id="SSF55831">
    <property type="entry name" value="Thymidylate synthase/dCMP hydroxymethylase"/>
    <property type="match status" value="1"/>
</dbReference>
<dbReference type="PROSITE" id="PS00091">
    <property type="entry name" value="THYMIDYLATE_SYNTHASE"/>
    <property type="match status" value="1"/>
</dbReference>
<sequence>MSIPTPYEDLLRDVLANGTHKSDRTGTGTLSVFGRQMRFDLSQSFPLITTKRVHFKSVAVELLWFLRGETNVKWMQDQGVTIWNEWADADGELGPVYGVQWRSWPTPDGGHIDQIAELVENLKSNPDSRRHIVSAWNVAELQDMALPPCHAFFQFYVADGKLSCQLYQRSADTFLGVPFNIASYALLTCMLAQQVGLEPGEFVWTGGDVHIYDNHMDQVLKQLKREPYEYPQLKILRKPDSIFDYTLDDFEVVGYQHHPTIKAPIAV</sequence>
<name>TYSY_ARTS2</name>
<feature type="chain" id="PRO_0000321466" description="Thymidylate synthase">
    <location>
        <begin position="1"/>
        <end position="267"/>
    </location>
</feature>
<feature type="active site" description="Nucleophile" evidence="1">
    <location>
        <position position="149"/>
    </location>
</feature>
<feature type="binding site" description="in other chain" evidence="1">
    <location>
        <position position="24"/>
    </location>
    <ligand>
        <name>dUMP</name>
        <dbReference type="ChEBI" id="CHEBI:246422"/>
        <note>ligand shared between dimeric partners</note>
    </ligand>
</feature>
<feature type="binding site" evidence="1">
    <location>
        <position position="54"/>
    </location>
    <ligand>
        <name>(6R)-5,10-methylene-5,6,7,8-tetrahydrofolate</name>
        <dbReference type="ChEBI" id="CHEBI:15636"/>
    </ligand>
</feature>
<feature type="binding site" evidence="1">
    <location>
        <begin position="129"/>
        <end position="130"/>
    </location>
    <ligand>
        <name>dUMP</name>
        <dbReference type="ChEBI" id="CHEBI:246422"/>
        <note>ligand shared between dimeric partners</note>
    </ligand>
</feature>
<feature type="binding site" description="in other chain" evidence="1">
    <location>
        <begin position="169"/>
        <end position="172"/>
    </location>
    <ligand>
        <name>dUMP</name>
        <dbReference type="ChEBI" id="CHEBI:246422"/>
        <note>ligand shared between dimeric partners</note>
    </ligand>
</feature>
<feature type="binding site" evidence="1">
    <location>
        <position position="172"/>
    </location>
    <ligand>
        <name>(6R)-5,10-methylene-5,6,7,8-tetrahydrofolate</name>
        <dbReference type="ChEBI" id="CHEBI:15636"/>
    </ligand>
</feature>
<feature type="binding site" description="in other chain" evidence="1">
    <location>
        <position position="180"/>
    </location>
    <ligand>
        <name>dUMP</name>
        <dbReference type="ChEBI" id="CHEBI:246422"/>
        <note>ligand shared between dimeric partners</note>
    </ligand>
</feature>
<feature type="binding site" description="in other chain" evidence="1">
    <location>
        <begin position="210"/>
        <end position="212"/>
    </location>
    <ligand>
        <name>dUMP</name>
        <dbReference type="ChEBI" id="CHEBI:246422"/>
        <note>ligand shared between dimeric partners</note>
    </ligand>
</feature>
<feature type="binding site" evidence="1">
    <location>
        <position position="266"/>
    </location>
    <ligand>
        <name>(6R)-5,10-methylene-5,6,7,8-tetrahydrofolate</name>
        <dbReference type="ChEBI" id="CHEBI:15636"/>
    </ligand>
</feature>
<reference key="1">
    <citation type="journal article" date="2013" name="Stand. Genomic Sci.">
        <title>Complete genome sequence of Arthrobacter sp. strain FB24.</title>
        <authorList>
            <person name="Nakatsu C.H."/>
            <person name="Barabote R."/>
            <person name="Thompson S."/>
            <person name="Bruce D."/>
            <person name="Detter C."/>
            <person name="Brettin T."/>
            <person name="Han C."/>
            <person name="Beasley F."/>
            <person name="Chen W."/>
            <person name="Konopka A."/>
            <person name="Xie G."/>
        </authorList>
    </citation>
    <scope>NUCLEOTIDE SEQUENCE [LARGE SCALE GENOMIC DNA]</scope>
    <source>
        <strain>FB24</strain>
    </source>
</reference>
<proteinExistence type="inferred from homology"/>
<gene>
    <name evidence="1" type="primary">thyA</name>
    <name type="ordered locus">Arth_3018</name>
</gene>